<sequence length="80" mass="9076">MSLEILEQLEAKVQMAVDTIALLQMEVEELKETNAELTQNLEQANNGRSEVEQEAQKARDEQASFEARIRGLLGKMEEVE</sequence>
<protein>
    <recommendedName>
        <fullName evidence="1">Cell division protein ZapB</fullName>
    </recommendedName>
</protein>
<dbReference type="EMBL" id="FM178379">
    <property type="protein sequence ID" value="CAQ77973.1"/>
    <property type="molecule type" value="Genomic_DNA"/>
</dbReference>
<dbReference type="RefSeq" id="WP_012549125.1">
    <property type="nucleotide sequence ID" value="NC_011312.1"/>
</dbReference>
<dbReference type="SMR" id="B6EPL9"/>
<dbReference type="KEGG" id="vsa:VSAL_I0288"/>
<dbReference type="eggNOG" id="COG3074">
    <property type="taxonomic scope" value="Bacteria"/>
</dbReference>
<dbReference type="HOGENOM" id="CLU_171174_2_0_6"/>
<dbReference type="Proteomes" id="UP000001730">
    <property type="component" value="Chromosome 1"/>
</dbReference>
<dbReference type="GO" id="GO:0005737">
    <property type="term" value="C:cytoplasm"/>
    <property type="evidence" value="ECO:0007669"/>
    <property type="project" value="UniProtKB-SubCell"/>
</dbReference>
<dbReference type="GO" id="GO:0000917">
    <property type="term" value="P:division septum assembly"/>
    <property type="evidence" value="ECO:0007669"/>
    <property type="project" value="UniProtKB-KW"/>
</dbReference>
<dbReference type="GO" id="GO:0043093">
    <property type="term" value="P:FtsZ-dependent cytokinesis"/>
    <property type="evidence" value="ECO:0007669"/>
    <property type="project" value="UniProtKB-UniRule"/>
</dbReference>
<dbReference type="Gene3D" id="1.20.5.340">
    <property type="match status" value="1"/>
</dbReference>
<dbReference type="HAMAP" id="MF_01196">
    <property type="entry name" value="ZapB"/>
    <property type="match status" value="1"/>
</dbReference>
<dbReference type="InterPro" id="IPR009252">
    <property type="entry name" value="Cell_div_ZapB"/>
</dbReference>
<dbReference type="Pfam" id="PF06005">
    <property type="entry name" value="ZapB"/>
    <property type="match status" value="1"/>
</dbReference>
<keyword id="KW-0131">Cell cycle</keyword>
<keyword id="KW-0132">Cell division</keyword>
<keyword id="KW-0175">Coiled coil</keyword>
<keyword id="KW-0963">Cytoplasm</keyword>
<keyword id="KW-0717">Septation</keyword>
<proteinExistence type="inferred from homology"/>
<evidence type="ECO:0000255" key="1">
    <source>
        <dbReference type="HAMAP-Rule" id="MF_01196"/>
    </source>
</evidence>
<evidence type="ECO:0000256" key="2">
    <source>
        <dbReference type="SAM" id="MobiDB-lite"/>
    </source>
</evidence>
<gene>
    <name evidence="1" type="primary">zapB</name>
    <name type="ordered locus">VSAL_I0288</name>
</gene>
<comment type="function">
    <text evidence="1">Non-essential, abundant cell division factor that is required for proper Z-ring formation. It is recruited early to the divisome by direct interaction with FtsZ, stimulating Z-ring assembly and thereby promoting cell division earlier in the cell cycle. Its recruitment to the Z-ring requires functional FtsA or ZipA.</text>
</comment>
<comment type="subunit">
    <text evidence="1">Homodimer. The ends of the coiled-coil dimer bind to each other, forming polymers. Interacts with FtsZ.</text>
</comment>
<comment type="subcellular location">
    <subcellularLocation>
        <location evidence="1">Cytoplasm</location>
    </subcellularLocation>
    <text evidence="1">Localizes to the septum at mid-cell, in a FtsZ-like pattern.</text>
</comment>
<comment type="similarity">
    <text evidence="1">Belongs to the ZapB family.</text>
</comment>
<feature type="chain" id="PRO_1000138428" description="Cell division protein ZapB">
    <location>
        <begin position="1"/>
        <end position="80"/>
    </location>
</feature>
<feature type="region of interest" description="Disordered" evidence="2">
    <location>
        <begin position="41"/>
        <end position="62"/>
    </location>
</feature>
<feature type="coiled-coil region" evidence="1">
    <location>
        <begin position="3"/>
        <end position="80"/>
    </location>
</feature>
<feature type="compositionally biased region" description="Basic and acidic residues" evidence="2">
    <location>
        <begin position="49"/>
        <end position="62"/>
    </location>
</feature>
<name>ZAPB_ALISL</name>
<accession>B6EPL9</accession>
<organism>
    <name type="scientific">Aliivibrio salmonicida (strain LFI1238)</name>
    <name type="common">Vibrio salmonicida (strain LFI1238)</name>
    <dbReference type="NCBI Taxonomy" id="316275"/>
    <lineage>
        <taxon>Bacteria</taxon>
        <taxon>Pseudomonadati</taxon>
        <taxon>Pseudomonadota</taxon>
        <taxon>Gammaproteobacteria</taxon>
        <taxon>Vibrionales</taxon>
        <taxon>Vibrionaceae</taxon>
        <taxon>Aliivibrio</taxon>
    </lineage>
</organism>
<reference key="1">
    <citation type="journal article" date="2008" name="BMC Genomics">
        <title>The genome sequence of the fish pathogen Aliivibrio salmonicida strain LFI1238 shows extensive evidence of gene decay.</title>
        <authorList>
            <person name="Hjerde E."/>
            <person name="Lorentzen M.S."/>
            <person name="Holden M.T."/>
            <person name="Seeger K."/>
            <person name="Paulsen S."/>
            <person name="Bason N."/>
            <person name="Churcher C."/>
            <person name="Harris D."/>
            <person name="Norbertczak H."/>
            <person name="Quail M.A."/>
            <person name="Sanders S."/>
            <person name="Thurston S."/>
            <person name="Parkhill J."/>
            <person name="Willassen N.P."/>
            <person name="Thomson N.R."/>
        </authorList>
    </citation>
    <scope>NUCLEOTIDE SEQUENCE [LARGE SCALE GENOMIC DNA]</scope>
    <source>
        <strain>LFI1238</strain>
    </source>
</reference>